<dbReference type="EC" id="1.1.-.-" evidence="1"/>
<dbReference type="EMBL" id="AE008922">
    <property type="protein sequence ID" value="AAM39425.1"/>
    <property type="molecule type" value="Genomic_DNA"/>
</dbReference>
<dbReference type="RefSeq" id="NP_635501.1">
    <property type="nucleotide sequence ID" value="NC_003902.1"/>
</dbReference>
<dbReference type="RefSeq" id="WP_011035364.1">
    <property type="nucleotide sequence ID" value="NC_003902.1"/>
</dbReference>
<dbReference type="SMR" id="Q8PE75"/>
<dbReference type="STRING" id="190485.XCC0106"/>
<dbReference type="EnsemblBacteria" id="AAM39425">
    <property type="protein sequence ID" value="AAM39425"/>
    <property type="gene ID" value="XCC0106"/>
</dbReference>
<dbReference type="KEGG" id="xcc:XCC0106"/>
<dbReference type="PATRIC" id="fig|190485.4.peg.118"/>
<dbReference type="eggNOG" id="COG1304">
    <property type="taxonomic scope" value="Bacteria"/>
</dbReference>
<dbReference type="HOGENOM" id="CLU_020639_0_0_6"/>
<dbReference type="OrthoDB" id="9770452at2"/>
<dbReference type="Proteomes" id="UP000001010">
    <property type="component" value="Chromosome"/>
</dbReference>
<dbReference type="GO" id="GO:0005886">
    <property type="term" value="C:plasma membrane"/>
    <property type="evidence" value="ECO:0000318"/>
    <property type="project" value="GO_Central"/>
</dbReference>
<dbReference type="GO" id="GO:0010181">
    <property type="term" value="F:FMN binding"/>
    <property type="evidence" value="ECO:0007669"/>
    <property type="project" value="InterPro"/>
</dbReference>
<dbReference type="GO" id="GO:0004459">
    <property type="term" value="F:L-lactate dehydrogenase activity"/>
    <property type="evidence" value="ECO:0000318"/>
    <property type="project" value="GO_Central"/>
</dbReference>
<dbReference type="GO" id="GO:0009060">
    <property type="term" value="P:aerobic respiration"/>
    <property type="evidence" value="ECO:0000318"/>
    <property type="project" value="GO_Central"/>
</dbReference>
<dbReference type="GO" id="GO:0006089">
    <property type="term" value="P:lactate metabolic process"/>
    <property type="evidence" value="ECO:0007669"/>
    <property type="project" value="UniProtKB-UniRule"/>
</dbReference>
<dbReference type="CDD" id="cd02809">
    <property type="entry name" value="alpha_hydroxyacid_oxid_FMN"/>
    <property type="match status" value="1"/>
</dbReference>
<dbReference type="FunFam" id="3.20.20.70:FF:000029">
    <property type="entry name" value="L-lactate dehydrogenase"/>
    <property type="match status" value="1"/>
</dbReference>
<dbReference type="Gene3D" id="3.20.20.70">
    <property type="entry name" value="Aldolase class I"/>
    <property type="match status" value="1"/>
</dbReference>
<dbReference type="HAMAP" id="MF_01559">
    <property type="entry name" value="L_lact_dehydr"/>
    <property type="match status" value="1"/>
</dbReference>
<dbReference type="InterPro" id="IPR013785">
    <property type="entry name" value="Aldolase_TIM"/>
</dbReference>
<dbReference type="InterPro" id="IPR012133">
    <property type="entry name" value="Alpha-hydoxy_acid_DH_FMN"/>
</dbReference>
<dbReference type="InterPro" id="IPR000262">
    <property type="entry name" value="FMN-dep_DH"/>
</dbReference>
<dbReference type="InterPro" id="IPR037396">
    <property type="entry name" value="FMN_HAD"/>
</dbReference>
<dbReference type="InterPro" id="IPR008259">
    <property type="entry name" value="FMN_hydac_DH_AS"/>
</dbReference>
<dbReference type="InterPro" id="IPR020920">
    <property type="entry name" value="LldD"/>
</dbReference>
<dbReference type="NCBIfam" id="NF033901">
    <property type="entry name" value="L_lactate_LldD"/>
    <property type="match status" value="1"/>
</dbReference>
<dbReference type="NCBIfam" id="NF008398">
    <property type="entry name" value="PRK11197.1"/>
    <property type="match status" value="1"/>
</dbReference>
<dbReference type="PANTHER" id="PTHR10578:SF85">
    <property type="entry name" value="L-LACTATE DEHYDROGENASE"/>
    <property type="match status" value="1"/>
</dbReference>
<dbReference type="PANTHER" id="PTHR10578">
    <property type="entry name" value="S -2-HYDROXY-ACID OXIDASE-RELATED"/>
    <property type="match status" value="1"/>
</dbReference>
<dbReference type="Pfam" id="PF01070">
    <property type="entry name" value="FMN_dh"/>
    <property type="match status" value="1"/>
</dbReference>
<dbReference type="PIRSF" id="PIRSF000138">
    <property type="entry name" value="Al-hdrx_acd_dh"/>
    <property type="match status" value="1"/>
</dbReference>
<dbReference type="SUPFAM" id="SSF51395">
    <property type="entry name" value="FMN-linked oxidoreductases"/>
    <property type="match status" value="1"/>
</dbReference>
<dbReference type="PROSITE" id="PS00557">
    <property type="entry name" value="FMN_HYDROXY_ACID_DH_1"/>
    <property type="match status" value="1"/>
</dbReference>
<dbReference type="PROSITE" id="PS51349">
    <property type="entry name" value="FMN_HYDROXY_ACID_DH_2"/>
    <property type="match status" value="1"/>
</dbReference>
<feature type="chain" id="PRO_0000206355" description="L-lactate dehydrogenase">
    <location>
        <begin position="1"/>
        <end position="386"/>
    </location>
</feature>
<feature type="domain" description="FMN hydroxy acid dehydrogenase" evidence="1">
    <location>
        <begin position="1"/>
        <end position="380"/>
    </location>
</feature>
<feature type="active site" description="Proton acceptor" evidence="1">
    <location>
        <position position="275"/>
    </location>
</feature>
<feature type="binding site" evidence="1">
    <location>
        <position position="24"/>
    </location>
    <ligand>
        <name>substrate</name>
    </ligand>
</feature>
<feature type="binding site" evidence="1">
    <location>
        <position position="106"/>
    </location>
    <ligand>
        <name>FMN</name>
        <dbReference type="ChEBI" id="CHEBI:58210"/>
    </ligand>
</feature>
<feature type="binding site" evidence="1">
    <location>
        <position position="127"/>
    </location>
    <ligand>
        <name>FMN</name>
        <dbReference type="ChEBI" id="CHEBI:58210"/>
    </ligand>
</feature>
<feature type="binding site" evidence="1">
    <location>
        <position position="129"/>
    </location>
    <ligand>
        <name>substrate</name>
    </ligand>
</feature>
<feature type="binding site" evidence="1">
    <location>
        <position position="155"/>
    </location>
    <ligand>
        <name>FMN</name>
        <dbReference type="ChEBI" id="CHEBI:58210"/>
    </ligand>
</feature>
<feature type="binding site" evidence="1">
    <location>
        <position position="164"/>
    </location>
    <ligand>
        <name>substrate</name>
    </ligand>
</feature>
<feature type="binding site" evidence="1">
    <location>
        <position position="251"/>
    </location>
    <ligand>
        <name>FMN</name>
        <dbReference type="ChEBI" id="CHEBI:58210"/>
    </ligand>
</feature>
<feature type="binding site" evidence="1">
    <location>
        <position position="278"/>
    </location>
    <ligand>
        <name>substrate</name>
    </ligand>
</feature>
<feature type="binding site" evidence="1">
    <location>
        <begin position="306"/>
        <end position="330"/>
    </location>
    <ligand>
        <name>FMN</name>
        <dbReference type="ChEBI" id="CHEBI:58210"/>
    </ligand>
</feature>
<name>LLDD_XANCP</name>
<evidence type="ECO:0000255" key="1">
    <source>
        <dbReference type="HAMAP-Rule" id="MF_01559"/>
    </source>
</evidence>
<organism>
    <name type="scientific">Xanthomonas campestris pv. campestris (strain ATCC 33913 / DSM 3586 / NCPPB 528 / LMG 568 / P 25)</name>
    <dbReference type="NCBI Taxonomy" id="190485"/>
    <lineage>
        <taxon>Bacteria</taxon>
        <taxon>Pseudomonadati</taxon>
        <taxon>Pseudomonadota</taxon>
        <taxon>Gammaproteobacteria</taxon>
        <taxon>Lysobacterales</taxon>
        <taxon>Lysobacteraceae</taxon>
        <taxon>Xanthomonas</taxon>
    </lineage>
</organism>
<comment type="function">
    <text evidence="1">Catalyzes the conversion of L-lactate to pyruvate. Is coupled to the respiratory chain.</text>
</comment>
<comment type="catalytic activity">
    <reaction evidence="1">
        <text>(S)-lactate + A = pyruvate + AH2</text>
        <dbReference type="Rhea" id="RHEA:45816"/>
        <dbReference type="ChEBI" id="CHEBI:13193"/>
        <dbReference type="ChEBI" id="CHEBI:15361"/>
        <dbReference type="ChEBI" id="CHEBI:16651"/>
        <dbReference type="ChEBI" id="CHEBI:17499"/>
    </reaction>
</comment>
<comment type="cofactor">
    <cofactor evidence="1">
        <name>FMN</name>
        <dbReference type="ChEBI" id="CHEBI:58210"/>
    </cofactor>
</comment>
<comment type="subcellular location">
    <subcellularLocation>
        <location evidence="1">Cell inner membrane</location>
        <topology evidence="1">Peripheral membrane protein</topology>
    </subcellularLocation>
</comment>
<comment type="similarity">
    <text evidence="1">Belongs to the FMN-dependent alpha-hydroxy acid dehydrogenase family.</text>
</comment>
<accession>Q8PE75</accession>
<sequence length="386" mass="41622">MIISAASDYRAAAEARLPPFLFHYIDGGAYAEHTLRRNVSDLADIALRQRVLRNMSDLSLSTELFGETLAMPVALAPVGLTGMYARRGEVQAARAAAARGIPFTLSTVSVCPIEEVAPAIDRPMWFQLYVLKDRGFMRNALERAKTAGVTTLVFTVDMPTPGARYRDAHSGMSGPNASLRRMLQAMTHPRWAWDVGLLGKPHDLGNISTYRGSPTGLQDYIGWLAANFDPSISWKDLEWIREFWTGPMVIKGILDPEDARDAVRFGADGIVVSNHGGRQLDGVLSSARALPAIADAVKGELKILADSGIRSGLDVVRMLALGADAVLLGRAFVYALAAGGQAGVENLLTLIEREMRVAMILTGTHSVAEISGDALSRVTREAAVVP</sequence>
<protein>
    <recommendedName>
        <fullName evidence="1">L-lactate dehydrogenase</fullName>
        <ecNumber evidence="1">1.1.-.-</ecNumber>
    </recommendedName>
</protein>
<keyword id="KW-0997">Cell inner membrane</keyword>
<keyword id="KW-1003">Cell membrane</keyword>
<keyword id="KW-0285">Flavoprotein</keyword>
<keyword id="KW-0288">FMN</keyword>
<keyword id="KW-0472">Membrane</keyword>
<keyword id="KW-0560">Oxidoreductase</keyword>
<keyword id="KW-1185">Reference proteome</keyword>
<proteinExistence type="inferred from homology"/>
<reference key="1">
    <citation type="journal article" date="2002" name="Nature">
        <title>Comparison of the genomes of two Xanthomonas pathogens with differing host specificities.</title>
        <authorList>
            <person name="da Silva A.C.R."/>
            <person name="Ferro J.A."/>
            <person name="Reinach F.C."/>
            <person name="Farah C.S."/>
            <person name="Furlan L.R."/>
            <person name="Quaggio R.B."/>
            <person name="Monteiro-Vitorello C.B."/>
            <person name="Van Sluys M.A."/>
            <person name="Almeida N.F. Jr."/>
            <person name="Alves L.M.C."/>
            <person name="do Amaral A.M."/>
            <person name="Bertolini M.C."/>
            <person name="Camargo L.E.A."/>
            <person name="Camarotte G."/>
            <person name="Cannavan F."/>
            <person name="Cardozo J."/>
            <person name="Chambergo F."/>
            <person name="Ciapina L.P."/>
            <person name="Cicarelli R.M.B."/>
            <person name="Coutinho L.L."/>
            <person name="Cursino-Santos J.R."/>
            <person name="El-Dorry H."/>
            <person name="Faria J.B."/>
            <person name="Ferreira A.J.S."/>
            <person name="Ferreira R.C.C."/>
            <person name="Ferro M.I.T."/>
            <person name="Formighieri E.F."/>
            <person name="Franco M.C."/>
            <person name="Greggio C.C."/>
            <person name="Gruber A."/>
            <person name="Katsuyama A.M."/>
            <person name="Kishi L.T."/>
            <person name="Leite R.P."/>
            <person name="Lemos E.G.M."/>
            <person name="Lemos M.V.F."/>
            <person name="Locali E.C."/>
            <person name="Machado M.A."/>
            <person name="Madeira A.M.B.N."/>
            <person name="Martinez-Rossi N.M."/>
            <person name="Martins E.C."/>
            <person name="Meidanis J."/>
            <person name="Menck C.F.M."/>
            <person name="Miyaki C.Y."/>
            <person name="Moon D.H."/>
            <person name="Moreira L.M."/>
            <person name="Novo M.T.M."/>
            <person name="Okura V.K."/>
            <person name="Oliveira M.C."/>
            <person name="Oliveira V.R."/>
            <person name="Pereira H.A."/>
            <person name="Rossi A."/>
            <person name="Sena J.A.D."/>
            <person name="Silva C."/>
            <person name="de Souza R.F."/>
            <person name="Spinola L.A.F."/>
            <person name="Takita M.A."/>
            <person name="Tamura R.E."/>
            <person name="Teixeira E.C."/>
            <person name="Tezza R.I.D."/>
            <person name="Trindade dos Santos M."/>
            <person name="Truffi D."/>
            <person name="Tsai S.M."/>
            <person name="White F.F."/>
            <person name="Setubal J.C."/>
            <person name="Kitajima J.P."/>
        </authorList>
    </citation>
    <scope>NUCLEOTIDE SEQUENCE [LARGE SCALE GENOMIC DNA]</scope>
    <source>
        <strain>ATCC 33913 / DSM 3586 / NCPPB 528 / LMG 568 / P 25</strain>
    </source>
</reference>
<gene>
    <name evidence="1" type="primary">lldD</name>
    <name type="ordered locus">XCC0106</name>
</gene>